<protein>
    <recommendedName>
        <fullName evidence="1">Large ribosomal subunit protein bL31</fullName>
    </recommendedName>
    <alternativeName>
        <fullName evidence="2">50S ribosomal protein L31</fullName>
    </alternativeName>
</protein>
<comment type="function">
    <text evidence="1">Binds the 23S rRNA.</text>
</comment>
<comment type="cofactor">
    <cofactor evidence="1">
        <name>Zn(2+)</name>
        <dbReference type="ChEBI" id="CHEBI:29105"/>
    </cofactor>
    <text evidence="1">Binds 1 zinc ion per subunit.</text>
</comment>
<comment type="subunit">
    <text evidence="1">Part of the 50S ribosomal subunit.</text>
</comment>
<comment type="similarity">
    <text evidence="1">Belongs to the bacterial ribosomal protein bL31 family. Type A subfamily.</text>
</comment>
<evidence type="ECO:0000255" key="1">
    <source>
        <dbReference type="HAMAP-Rule" id="MF_00501"/>
    </source>
</evidence>
<evidence type="ECO:0000305" key="2"/>
<keyword id="KW-0479">Metal-binding</keyword>
<keyword id="KW-1185">Reference proteome</keyword>
<keyword id="KW-0687">Ribonucleoprotein</keyword>
<keyword id="KW-0689">Ribosomal protein</keyword>
<keyword id="KW-0694">RNA-binding</keyword>
<keyword id="KW-0699">rRNA-binding</keyword>
<keyword id="KW-0862">Zinc</keyword>
<accession>Q8D2S5</accession>
<reference key="1">
    <citation type="journal article" date="2002" name="Nat. Genet.">
        <title>Genome sequence of the endocellular obligate symbiont of tsetse flies, Wigglesworthia glossinidia.</title>
        <authorList>
            <person name="Akman L."/>
            <person name="Yamashita A."/>
            <person name="Watanabe H."/>
            <person name="Oshima K."/>
            <person name="Shiba T."/>
            <person name="Hattori M."/>
            <person name="Aksoy S."/>
        </authorList>
    </citation>
    <scope>NUCLEOTIDE SEQUENCE [LARGE SCALE GENOMIC DNA]</scope>
</reference>
<proteinExistence type="inferred from homology"/>
<organism>
    <name type="scientific">Wigglesworthia glossinidia brevipalpis</name>
    <dbReference type="NCBI Taxonomy" id="36870"/>
    <lineage>
        <taxon>Bacteria</taxon>
        <taxon>Pseudomonadati</taxon>
        <taxon>Pseudomonadota</taxon>
        <taxon>Gammaproteobacteria</taxon>
        <taxon>Enterobacterales</taxon>
        <taxon>Erwiniaceae</taxon>
        <taxon>Wigglesworthia</taxon>
    </lineage>
</organism>
<dbReference type="EMBL" id="BA000021">
    <property type="protein sequence ID" value="BAC24425.1"/>
    <property type="molecule type" value="Genomic_DNA"/>
</dbReference>
<dbReference type="SMR" id="Q8D2S5"/>
<dbReference type="STRING" id="36870.gene:10368772"/>
<dbReference type="KEGG" id="wbr:rpmE"/>
<dbReference type="eggNOG" id="COG0254">
    <property type="taxonomic scope" value="Bacteria"/>
</dbReference>
<dbReference type="HOGENOM" id="CLU_114306_4_3_6"/>
<dbReference type="OrthoDB" id="9803251at2"/>
<dbReference type="Proteomes" id="UP000000562">
    <property type="component" value="Chromosome"/>
</dbReference>
<dbReference type="GO" id="GO:1990904">
    <property type="term" value="C:ribonucleoprotein complex"/>
    <property type="evidence" value="ECO:0007669"/>
    <property type="project" value="UniProtKB-KW"/>
</dbReference>
<dbReference type="GO" id="GO:0005840">
    <property type="term" value="C:ribosome"/>
    <property type="evidence" value="ECO:0007669"/>
    <property type="project" value="UniProtKB-KW"/>
</dbReference>
<dbReference type="GO" id="GO:0046872">
    <property type="term" value="F:metal ion binding"/>
    <property type="evidence" value="ECO:0007669"/>
    <property type="project" value="UniProtKB-KW"/>
</dbReference>
<dbReference type="GO" id="GO:0019843">
    <property type="term" value="F:rRNA binding"/>
    <property type="evidence" value="ECO:0007669"/>
    <property type="project" value="UniProtKB-KW"/>
</dbReference>
<dbReference type="GO" id="GO:0003735">
    <property type="term" value="F:structural constituent of ribosome"/>
    <property type="evidence" value="ECO:0007669"/>
    <property type="project" value="InterPro"/>
</dbReference>
<dbReference type="GO" id="GO:0006412">
    <property type="term" value="P:translation"/>
    <property type="evidence" value="ECO:0007669"/>
    <property type="project" value="UniProtKB-UniRule"/>
</dbReference>
<dbReference type="Gene3D" id="4.10.830.30">
    <property type="entry name" value="Ribosomal protein L31"/>
    <property type="match status" value="1"/>
</dbReference>
<dbReference type="HAMAP" id="MF_00501">
    <property type="entry name" value="Ribosomal_bL31_1"/>
    <property type="match status" value="1"/>
</dbReference>
<dbReference type="InterPro" id="IPR034704">
    <property type="entry name" value="Ribosomal_bL28/bL31-like_sf"/>
</dbReference>
<dbReference type="InterPro" id="IPR002150">
    <property type="entry name" value="Ribosomal_bL31"/>
</dbReference>
<dbReference type="InterPro" id="IPR027491">
    <property type="entry name" value="Ribosomal_bL31_A"/>
</dbReference>
<dbReference type="InterPro" id="IPR042105">
    <property type="entry name" value="Ribosomal_bL31_sf"/>
</dbReference>
<dbReference type="NCBIfam" id="TIGR00105">
    <property type="entry name" value="L31"/>
    <property type="match status" value="1"/>
</dbReference>
<dbReference type="NCBIfam" id="NF000612">
    <property type="entry name" value="PRK00019.1"/>
    <property type="match status" value="1"/>
</dbReference>
<dbReference type="PANTHER" id="PTHR33280">
    <property type="entry name" value="50S RIBOSOMAL PROTEIN L31, CHLOROPLASTIC"/>
    <property type="match status" value="1"/>
</dbReference>
<dbReference type="PANTHER" id="PTHR33280:SF6">
    <property type="entry name" value="LARGE RIBOSOMAL SUBUNIT PROTEIN BL31A"/>
    <property type="match status" value="1"/>
</dbReference>
<dbReference type="Pfam" id="PF01197">
    <property type="entry name" value="Ribosomal_L31"/>
    <property type="match status" value="1"/>
</dbReference>
<dbReference type="PRINTS" id="PR01249">
    <property type="entry name" value="RIBOSOMALL31"/>
</dbReference>
<dbReference type="SUPFAM" id="SSF143800">
    <property type="entry name" value="L28p-like"/>
    <property type="match status" value="1"/>
</dbReference>
<dbReference type="PROSITE" id="PS01143">
    <property type="entry name" value="RIBOSOMAL_L31"/>
    <property type="match status" value="1"/>
</dbReference>
<feature type="chain" id="PRO_0000173181" description="Large ribosomal subunit protein bL31">
    <location>
        <begin position="1"/>
        <end position="71"/>
    </location>
</feature>
<feature type="binding site" evidence="1">
    <location>
        <position position="16"/>
    </location>
    <ligand>
        <name>Zn(2+)</name>
        <dbReference type="ChEBI" id="CHEBI:29105"/>
    </ligand>
</feature>
<feature type="binding site" evidence="1">
    <location>
        <position position="18"/>
    </location>
    <ligand>
        <name>Zn(2+)</name>
        <dbReference type="ChEBI" id="CHEBI:29105"/>
    </ligand>
</feature>
<feature type="binding site" evidence="1">
    <location>
        <position position="37"/>
    </location>
    <ligand>
        <name>Zn(2+)</name>
        <dbReference type="ChEBI" id="CHEBI:29105"/>
    </ligand>
</feature>
<feature type="binding site" evidence="1">
    <location>
        <position position="40"/>
    </location>
    <ligand>
        <name>Zn(2+)</name>
        <dbReference type="ChEBI" id="CHEBI:29105"/>
    </ligand>
</feature>
<gene>
    <name evidence="1" type="primary">rpmE</name>
    <name type="ordered locus">WIGBR2790</name>
</gene>
<name>RL31_WIGBR</name>
<sequence length="71" mass="8117">MKKKIHPMSLDILATCSCGNSLKIKSTIKKDILLDVCNKCHPFYTGTQKKLNIGGRVSKFKKRFDNIVYKK</sequence>